<protein>
    <recommendedName>
        <fullName evidence="1">Biotin synthase</fullName>
        <ecNumber evidence="1">2.8.1.6</ecNumber>
    </recommendedName>
</protein>
<keyword id="KW-0001">2Fe-2S</keyword>
<keyword id="KW-0004">4Fe-4S</keyword>
<keyword id="KW-0093">Biotin biosynthesis</keyword>
<keyword id="KW-0408">Iron</keyword>
<keyword id="KW-0411">Iron-sulfur</keyword>
<keyword id="KW-0479">Metal-binding</keyword>
<keyword id="KW-0949">S-adenosyl-L-methionine</keyword>
<keyword id="KW-0808">Transferase</keyword>
<feature type="chain" id="PRO_0000381270" description="Biotin synthase">
    <location>
        <begin position="1"/>
        <end position="336"/>
    </location>
</feature>
<feature type="domain" description="Radical SAM core" evidence="2">
    <location>
        <begin position="54"/>
        <end position="281"/>
    </location>
</feature>
<feature type="binding site" evidence="1">
    <location>
        <position position="69"/>
    </location>
    <ligand>
        <name>[4Fe-4S] cluster</name>
        <dbReference type="ChEBI" id="CHEBI:49883"/>
        <note>4Fe-4S-S-AdoMet</note>
    </ligand>
</feature>
<feature type="binding site" evidence="1">
    <location>
        <position position="73"/>
    </location>
    <ligand>
        <name>[4Fe-4S] cluster</name>
        <dbReference type="ChEBI" id="CHEBI:49883"/>
        <note>4Fe-4S-S-AdoMet</note>
    </ligand>
</feature>
<feature type="binding site" evidence="1">
    <location>
        <position position="76"/>
    </location>
    <ligand>
        <name>[4Fe-4S] cluster</name>
        <dbReference type="ChEBI" id="CHEBI:49883"/>
        <note>4Fe-4S-S-AdoMet</note>
    </ligand>
</feature>
<feature type="binding site" evidence="1">
    <location>
        <position position="113"/>
    </location>
    <ligand>
        <name>[2Fe-2S] cluster</name>
        <dbReference type="ChEBI" id="CHEBI:190135"/>
    </ligand>
</feature>
<feature type="binding site" evidence="1">
    <location>
        <position position="144"/>
    </location>
    <ligand>
        <name>[2Fe-2S] cluster</name>
        <dbReference type="ChEBI" id="CHEBI:190135"/>
    </ligand>
</feature>
<feature type="binding site" evidence="1">
    <location>
        <position position="204"/>
    </location>
    <ligand>
        <name>[2Fe-2S] cluster</name>
        <dbReference type="ChEBI" id="CHEBI:190135"/>
    </ligand>
</feature>
<feature type="binding site" evidence="1">
    <location>
        <position position="276"/>
    </location>
    <ligand>
        <name>[2Fe-2S] cluster</name>
        <dbReference type="ChEBI" id="CHEBI:190135"/>
    </ligand>
</feature>
<dbReference type="EC" id="2.8.1.6" evidence="1"/>
<dbReference type="EMBL" id="CP000124">
    <property type="protein sequence ID" value="ABA50391.1"/>
    <property type="status" value="ALT_INIT"/>
    <property type="molecule type" value="Genomic_DNA"/>
</dbReference>
<dbReference type="RefSeq" id="WP_038724130.1">
    <property type="nucleotide sequence ID" value="NC_007434.1"/>
</dbReference>
<dbReference type="SMR" id="Q3JWR8"/>
<dbReference type="EnsemblBacteria" id="ABA50391">
    <property type="protein sequence ID" value="ABA50391"/>
    <property type="gene ID" value="BURPS1710b_0570"/>
</dbReference>
<dbReference type="KEGG" id="bpm:BURPS1710b_0570"/>
<dbReference type="HOGENOM" id="CLU_033172_1_2_4"/>
<dbReference type="UniPathway" id="UPA00078">
    <property type="reaction ID" value="UER00162"/>
</dbReference>
<dbReference type="Proteomes" id="UP000002700">
    <property type="component" value="Chromosome I"/>
</dbReference>
<dbReference type="GO" id="GO:0051537">
    <property type="term" value="F:2 iron, 2 sulfur cluster binding"/>
    <property type="evidence" value="ECO:0007669"/>
    <property type="project" value="UniProtKB-KW"/>
</dbReference>
<dbReference type="GO" id="GO:0051539">
    <property type="term" value="F:4 iron, 4 sulfur cluster binding"/>
    <property type="evidence" value="ECO:0007669"/>
    <property type="project" value="UniProtKB-KW"/>
</dbReference>
<dbReference type="GO" id="GO:0004076">
    <property type="term" value="F:biotin synthase activity"/>
    <property type="evidence" value="ECO:0007669"/>
    <property type="project" value="UniProtKB-UniRule"/>
</dbReference>
<dbReference type="GO" id="GO:0005506">
    <property type="term" value="F:iron ion binding"/>
    <property type="evidence" value="ECO:0007669"/>
    <property type="project" value="UniProtKB-UniRule"/>
</dbReference>
<dbReference type="GO" id="GO:0009102">
    <property type="term" value="P:biotin biosynthetic process"/>
    <property type="evidence" value="ECO:0007669"/>
    <property type="project" value="UniProtKB-UniRule"/>
</dbReference>
<dbReference type="CDD" id="cd01335">
    <property type="entry name" value="Radical_SAM"/>
    <property type="match status" value="1"/>
</dbReference>
<dbReference type="FunFam" id="3.20.20.70:FF:000011">
    <property type="entry name" value="Biotin synthase"/>
    <property type="match status" value="1"/>
</dbReference>
<dbReference type="Gene3D" id="3.20.20.70">
    <property type="entry name" value="Aldolase class I"/>
    <property type="match status" value="1"/>
</dbReference>
<dbReference type="HAMAP" id="MF_01694">
    <property type="entry name" value="BioB"/>
    <property type="match status" value="1"/>
</dbReference>
<dbReference type="InterPro" id="IPR013785">
    <property type="entry name" value="Aldolase_TIM"/>
</dbReference>
<dbReference type="InterPro" id="IPR010722">
    <property type="entry name" value="BATS_dom"/>
</dbReference>
<dbReference type="InterPro" id="IPR002684">
    <property type="entry name" value="Biotin_synth/BioAB"/>
</dbReference>
<dbReference type="InterPro" id="IPR024177">
    <property type="entry name" value="Biotin_synthase"/>
</dbReference>
<dbReference type="InterPro" id="IPR006638">
    <property type="entry name" value="Elp3/MiaA/NifB-like_rSAM"/>
</dbReference>
<dbReference type="InterPro" id="IPR007197">
    <property type="entry name" value="rSAM"/>
</dbReference>
<dbReference type="NCBIfam" id="TIGR00433">
    <property type="entry name" value="bioB"/>
    <property type="match status" value="1"/>
</dbReference>
<dbReference type="PANTHER" id="PTHR22976">
    <property type="entry name" value="BIOTIN SYNTHASE"/>
    <property type="match status" value="1"/>
</dbReference>
<dbReference type="PANTHER" id="PTHR22976:SF2">
    <property type="entry name" value="BIOTIN SYNTHASE, MITOCHONDRIAL"/>
    <property type="match status" value="1"/>
</dbReference>
<dbReference type="Pfam" id="PF06968">
    <property type="entry name" value="BATS"/>
    <property type="match status" value="1"/>
</dbReference>
<dbReference type="Pfam" id="PF04055">
    <property type="entry name" value="Radical_SAM"/>
    <property type="match status" value="1"/>
</dbReference>
<dbReference type="PIRSF" id="PIRSF001619">
    <property type="entry name" value="Biotin_synth"/>
    <property type="match status" value="1"/>
</dbReference>
<dbReference type="SFLD" id="SFLDG01060">
    <property type="entry name" value="BATS_domain_containing"/>
    <property type="match status" value="1"/>
</dbReference>
<dbReference type="SFLD" id="SFLDF00272">
    <property type="entry name" value="biotin_synthase"/>
    <property type="match status" value="1"/>
</dbReference>
<dbReference type="SMART" id="SM00876">
    <property type="entry name" value="BATS"/>
    <property type="match status" value="1"/>
</dbReference>
<dbReference type="SMART" id="SM00729">
    <property type="entry name" value="Elp3"/>
    <property type="match status" value="1"/>
</dbReference>
<dbReference type="SUPFAM" id="SSF102114">
    <property type="entry name" value="Radical SAM enzymes"/>
    <property type="match status" value="1"/>
</dbReference>
<dbReference type="PROSITE" id="PS51918">
    <property type="entry name" value="RADICAL_SAM"/>
    <property type="match status" value="1"/>
</dbReference>
<name>BIOB_BURP1</name>
<gene>
    <name evidence="1" type="primary">bioB</name>
    <name type="ordered locus">BURPS1710b_0570</name>
</gene>
<comment type="function">
    <text evidence="1">Catalyzes the conversion of dethiobiotin (DTB) to biotin by the insertion of a sulfur atom into dethiobiotin via a radical-based mechanism.</text>
</comment>
<comment type="catalytic activity">
    <reaction evidence="1">
        <text>(4R,5S)-dethiobiotin + (sulfur carrier)-SH + 2 reduced [2Fe-2S]-[ferredoxin] + 2 S-adenosyl-L-methionine = (sulfur carrier)-H + biotin + 2 5'-deoxyadenosine + 2 L-methionine + 2 oxidized [2Fe-2S]-[ferredoxin]</text>
        <dbReference type="Rhea" id="RHEA:22060"/>
        <dbReference type="Rhea" id="RHEA-COMP:10000"/>
        <dbReference type="Rhea" id="RHEA-COMP:10001"/>
        <dbReference type="Rhea" id="RHEA-COMP:14737"/>
        <dbReference type="Rhea" id="RHEA-COMP:14739"/>
        <dbReference type="ChEBI" id="CHEBI:17319"/>
        <dbReference type="ChEBI" id="CHEBI:29917"/>
        <dbReference type="ChEBI" id="CHEBI:33737"/>
        <dbReference type="ChEBI" id="CHEBI:33738"/>
        <dbReference type="ChEBI" id="CHEBI:57586"/>
        <dbReference type="ChEBI" id="CHEBI:57844"/>
        <dbReference type="ChEBI" id="CHEBI:59789"/>
        <dbReference type="ChEBI" id="CHEBI:64428"/>
        <dbReference type="ChEBI" id="CHEBI:149473"/>
        <dbReference type="EC" id="2.8.1.6"/>
    </reaction>
</comment>
<comment type="cofactor">
    <cofactor evidence="1">
        <name>[4Fe-4S] cluster</name>
        <dbReference type="ChEBI" id="CHEBI:49883"/>
    </cofactor>
    <text evidence="1">Binds 1 [4Fe-4S] cluster. The cluster is coordinated with 3 cysteines and an exchangeable S-adenosyl-L-methionine.</text>
</comment>
<comment type="cofactor">
    <cofactor evidence="1">
        <name>[2Fe-2S] cluster</name>
        <dbReference type="ChEBI" id="CHEBI:190135"/>
    </cofactor>
    <text evidence="1">Binds 1 [2Fe-2S] cluster. The cluster is coordinated with 3 cysteines and 1 arginine.</text>
</comment>
<comment type="pathway">
    <text evidence="1">Cofactor biosynthesis; biotin biosynthesis; biotin from 7,8-diaminononanoate: step 2/2.</text>
</comment>
<comment type="subunit">
    <text evidence="1">Homodimer.</text>
</comment>
<comment type="similarity">
    <text evidence="1">Belongs to the radical SAM superfamily. Biotin synthase family.</text>
</comment>
<comment type="sequence caution" evidence="3">
    <conflict type="erroneous initiation">
        <sequence resource="EMBL-CDS" id="ABA50391"/>
    </conflict>
</comment>
<evidence type="ECO:0000255" key="1">
    <source>
        <dbReference type="HAMAP-Rule" id="MF_01694"/>
    </source>
</evidence>
<evidence type="ECO:0000255" key="2">
    <source>
        <dbReference type="PROSITE-ProRule" id="PRU01266"/>
    </source>
</evidence>
<evidence type="ECO:0000305" key="3"/>
<reference key="1">
    <citation type="journal article" date="2010" name="Genome Biol. Evol.">
        <title>Continuing evolution of Burkholderia mallei through genome reduction and large-scale rearrangements.</title>
        <authorList>
            <person name="Losada L."/>
            <person name="Ronning C.M."/>
            <person name="DeShazer D."/>
            <person name="Woods D."/>
            <person name="Fedorova N."/>
            <person name="Kim H.S."/>
            <person name="Shabalina S.A."/>
            <person name="Pearson T.R."/>
            <person name="Brinkac L."/>
            <person name="Tan P."/>
            <person name="Nandi T."/>
            <person name="Crabtree J."/>
            <person name="Badger J."/>
            <person name="Beckstrom-Sternberg S."/>
            <person name="Saqib M."/>
            <person name="Schutzer S.E."/>
            <person name="Keim P."/>
            <person name="Nierman W.C."/>
        </authorList>
    </citation>
    <scope>NUCLEOTIDE SEQUENCE [LARGE SCALE GENOMIC DNA]</scope>
    <source>
        <strain>1710b</strain>
    </source>
</reference>
<sequence length="336" mass="36709">MTEAQTACATTETPVAAPAAPRWRVADVIALYELPFNDLLFRAQQTHREHFDANAIQLSTLLSIKTGGCEEDCGYCSQSAHHDTGLKAEKLMEVDAVLAAARTAKENGATRFCMGAAWRNPKDRHIEPIKEMIRGVKDMGLETCVTLGMLEEHQAKALAEAGLDYYNHNLDTSPEFYGQIISTRTYQDRLDTLERVRDAGINVCCGGIIGMGESRRERAGLIAQLANMNPYPESVPINNLVAIEGTPLANAQALDPFEFVRTIAVARITMPKAMVRLSAGREQLDDAMQALCFLAGANSMFYGDVLLTTGNPRAEADRKLLARLGMWASEASQLSA</sequence>
<organism>
    <name type="scientific">Burkholderia pseudomallei (strain 1710b)</name>
    <dbReference type="NCBI Taxonomy" id="320372"/>
    <lineage>
        <taxon>Bacteria</taxon>
        <taxon>Pseudomonadati</taxon>
        <taxon>Pseudomonadota</taxon>
        <taxon>Betaproteobacteria</taxon>
        <taxon>Burkholderiales</taxon>
        <taxon>Burkholderiaceae</taxon>
        <taxon>Burkholderia</taxon>
        <taxon>pseudomallei group</taxon>
    </lineage>
</organism>
<accession>Q3JWR8</accession>
<proteinExistence type="inferred from homology"/>